<evidence type="ECO:0000255" key="1">
    <source>
        <dbReference type="HAMAP-Rule" id="MF_00671"/>
    </source>
</evidence>
<keyword id="KW-0131">Cell cycle</keyword>
<keyword id="KW-0132">Cell division</keyword>
<keyword id="KW-0574">Periplasm</keyword>
<keyword id="KW-0732">Signal</keyword>
<accession>Q31H79</accession>
<reference key="1">
    <citation type="journal article" date="2006" name="PLoS Biol.">
        <title>The genome of deep-sea vent chemolithoautotroph Thiomicrospira crunogena XCL-2.</title>
        <authorList>
            <person name="Scott K.M."/>
            <person name="Sievert S.M."/>
            <person name="Abril F.N."/>
            <person name="Ball L.A."/>
            <person name="Barrett C.J."/>
            <person name="Blake R.A."/>
            <person name="Boller A.J."/>
            <person name="Chain P.S.G."/>
            <person name="Clark J.A."/>
            <person name="Davis C.R."/>
            <person name="Detter C."/>
            <person name="Do K.F."/>
            <person name="Dobrinski K.P."/>
            <person name="Faza B.I."/>
            <person name="Fitzpatrick K.A."/>
            <person name="Freyermuth S.K."/>
            <person name="Harmer T.L."/>
            <person name="Hauser L.J."/>
            <person name="Huegler M."/>
            <person name="Kerfeld C.A."/>
            <person name="Klotz M.G."/>
            <person name="Kong W.W."/>
            <person name="Land M."/>
            <person name="Lapidus A."/>
            <person name="Larimer F.W."/>
            <person name="Longo D.L."/>
            <person name="Lucas S."/>
            <person name="Malfatti S.A."/>
            <person name="Massey S.E."/>
            <person name="Martin D.D."/>
            <person name="McCuddin Z."/>
            <person name="Meyer F."/>
            <person name="Moore J.L."/>
            <person name="Ocampo L.H. Jr."/>
            <person name="Paul J.H."/>
            <person name="Paulsen I.T."/>
            <person name="Reep D.K."/>
            <person name="Ren Q."/>
            <person name="Ross R.L."/>
            <person name="Sato P.Y."/>
            <person name="Thomas P."/>
            <person name="Tinkham L.E."/>
            <person name="Zeruth G.T."/>
        </authorList>
    </citation>
    <scope>NUCLEOTIDE SEQUENCE [LARGE SCALE GENOMIC DNA]</scope>
    <source>
        <strain>DSM 25203 / XCL-2</strain>
    </source>
</reference>
<protein>
    <recommendedName>
        <fullName evidence="1">Tol-Pal system protein TolB</fullName>
    </recommendedName>
</protein>
<dbReference type="EMBL" id="CP000109">
    <property type="protein sequence ID" value="ABB41494.1"/>
    <property type="molecule type" value="Genomic_DNA"/>
</dbReference>
<dbReference type="SMR" id="Q31H79"/>
<dbReference type="STRING" id="317025.Tcr_0898"/>
<dbReference type="KEGG" id="tcx:Tcr_0898"/>
<dbReference type="eggNOG" id="COG0823">
    <property type="taxonomic scope" value="Bacteria"/>
</dbReference>
<dbReference type="HOGENOM" id="CLU_047123_0_0_6"/>
<dbReference type="OrthoDB" id="9802240at2"/>
<dbReference type="GO" id="GO:0042597">
    <property type="term" value="C:periplasmic space"/>
    <property type="evidence" value="ECO:0007669"/>
    <property type="project" value="UniProtKB-SubCell"/>
</dbReference>
<dbReference type="GO" id="GO:0051301">
    <property type="term" value="P:cell division"/>
    <property type="evidence" value="ECO:0007669"/>
    <property type="project" value="UniProtKB-UniRule"/>
</dbReference>
<dbReference type="GO" id="GO:0017038">
    <property type="term" value="P:protein import"/>
    <property type="evidence" value="ECO:0007669"/>
    <property type="project" value="InterPro"/>
</dbReference>
<dbReference type="Gene3D" id="2.120.10.30">
    <property type="entry name" value="TolB, C-terminal domain"/>
    <property type="match status" value="1"/>
</dbReference>
<dbReference type="Gene3D" id="3.40.50.10070">
    <property type="entry name" value="TolB, N-terminal domain"/>
    <property type="match status" value="1"/>
</dbReference>
<dbReference type="HAMAP" id="MF_00671">
    <property type="entry name" value="TolB"/>
    <property type="match status" value="1"/>
</dbReference>
<dbReference type="InterPro" id="IPR011042">
    <property type="entry name" value="6-blade_b-propeller_TolB-like"/>
</dbReference>
<dbReference type="InterPro" id="IPR011659">
    <property type="entry name" value="PD40"/>
</dbReference>
<dbReference type="InterPro" id="IPR014167">
    <property type="entry name" value="Tol-Pal_TolB"/>
</dbReference>
<dbReference type="InterPro" id="IPR007195">
    <property type="entry name" value="TolB_N"/>
</dbReference>
<dbReference type="NCBIfam" id="TIGR02800">
    <property type="entry name" value="propeller_TolB"/>
    <property type="match status" value="1"/>
</dbReference>
<dbReference type="PANTHER" id="PTHR36842:SF1">
    <property type="entry name" value="PROTEIN TOLB"/>
    <property type="match status" value="1"/>
</dbReference>
<dbReference type="PANTHER" id="PTHR36842">
    <property type="entry name" value="PROTEIN TOLB HOMOLOG"/>
    <property type="match status" value="1"/>
</dbReference>
<dbReference type="Pfam" id="PF07676">
    <property type="entry name" value="PD40"/>
    <property type="match status" value="5"/>
</dbReference>
<dbReference type="Pfam" id="PF04052">
    <property type="entry name" value="TolB_N"/>
    <property type="match status" value="1"/>
</dbReference>
<dbReference type="SUPFAM" id="SSF52964">
    <property type="entry name" value="TolB, N-terminal domain"/>
    <property type="match status" value="1"/>
</dbReference>
<dbReference type="SUPFAM" id="SSF69304">
    <property type="entry name" value="Tricorn protease N-terminal domain"/>
    <property type="match status" value="1"/>
</dbReference>
<proteinExistence type="inferred from homology"/>
<feature type="signal peptide" evidence="1">
    <location>
        <begin position="1"/>
        <end position="21"/>
    </location>
</feature>
<feature type="chain" id="PRO_0000259096" description="Tol-Pal system protein TolB" evidence="1">
    <location>
        <begin position="22"/>
        <end position="432"/>
    </location>
</feature>
<name>TOLB_HYDCU</name>
<sequence>MKKVIYTIVGFVFMWSTSVYADLTIQIDQSSDNAVPIALVPFEWKGAQLHPPQNITSIVGNDLLRSGKFKAVDEAKLPSRPKTLDDIDFYQWKQLGVDNLLMGRITEEANGTYQIEMRFVDLLRKEQVIGKRWSGISKSLLRQVAHKMSDLIYEELTGIRGAFNTRMAYVTVRNVKGKKQYSLEVADSDGYNSQPILRSSLPIMSPSWSPDGQHLAYVSFENGRSQIVLQSLDGKSRQIIAKFKGINGAPAWSPDGKKLALTLSKDGSADVYIMDMKTRKLRRLTRNWAIETEAVWAPNGHSLFFNSDRRGQPQIFQVFLDTGEMRRISYVGRYNANPAISPDGRYVAMVHANGGFHIAVLDLYNEDFNILTKTYLDESPTFSPNGEMILYAMNQGGQGKLAVVSVNSNVTQILSVQEGEVRSPSWGPYLPR</sequence>
<gene>
    <name evidence="1" type="primary">tolB</name>
    <name type="ordered locus">Tcr_0898</name>
</gene>
<organism>
    <name type="scientific">Hydrogenovibrio crunogenus (strain DSM 25203 / XCL-2)</name>
    <name type="common">Thiomicrospira crunogena</name>
    <dbReference type="NCBI Taxonomy" id="317025"/>
    <lineage>
        <taxon>Bacteria</taxon>
        <taxon>Pseudomonadati</taxon>
        <taxon>Pseudomonadota</taxon>
        <taxon>Gammaproteobacteria</taxon>
        <taxon>Thiotrichales</taxon>
        <taxon>Piscirickettsiaceae</taxon>
        <taxon>Hydrogenovibrio</taxon>
    </lineage>
</organism>
<comment type="function">
    <text evidence="1">Part of the Tol-Pal system, which plays a role in outer membrane invagination during cell division and is important for maintaining outer membrane integrity.</text>
</comment>
<comment type="subunit">
    <text evidence="1">The Tol-Pal system is composed of five core proteins: the inner membrane proteins TolA, TolQ and TolR, the periplasmic protein TolB and the outer membrane protein Pal. They form a network linking the inner and outer membranes and the peptidoglycan layer.</text>
</comment>
<comment type="subcellular location">
    <subcellularLocation>
        <location evidence="1">Periplasm</location>
    </subcellularLocation>
</comment>
<comment type="similarity">
    <text evidence="1">Belongs to the TolB family.</text>
</comment>